<organism>
    <name type="scientific">Malacoplasma penetrans (strain HF-2)</name>
    <name type="common">Mycoplasma penetrans</name>
    <dbReference type="NCBI Taxonomy" id="272633"/>
    <lineage>
        <taxon>Bacteria</taxon>
        <taxon>Bacillati</taxon>
        <taxon>Mycoplasmatota</taxon>
        <taxon>Mycoplasmoidales</taxon>
        <taxon>Mycoplasmoidaceae</taxon>
        <taxon>Malacoplasma</taxon>
    </lineage>
</organism>
<feature type="chain" id="PRO_0000350271" description="Probable dual-specificity RNA methyltransferase RlmN">
    <location>
        <begin position="1"/>
        <end position="352"/>
    </location>
</feature>
<feature type="domain" description="Radical SAM core" evidence="2">
    <location>
        <begin position="99"/>
        <end position="333"/>
    </location>
</feature>
<feature type="active site" description="Proton acceptor" evidence="1">
    <location>
        <position position="93"/>
    </location>
</feature>
<feature type="active site" description="S-methylcysteine intermediate" evidence="1">
    <location>
        <position position="336"/>
    </location>
</feature>
<feature type="binding site" evidence="1">
    <location>
        <position position="113"/>
    </location>
    <ligand>
        <name>[4Fe-4S] cluster</name>
        <dbReference type="ChEBI" id="CHEBI:49883"/>
        <note>4Fe-4S-S-AdoMet</note>
    </ligand>
</feature>
<feature type="binding site" evidence="1">
    <location>
        <position position="117"/>
    </location>
    <ligand>
        <name>[4Fe-4S] cluster</name>
        <dbReference type="ChEBI" id="CHEBI:49883"/>
        <note>4Fe-4S-S-AdoMet</note>
    </ligand>
</feature>
<feature type="binding site" evidence="1">
    <location>
        <position position="120"/>
    </location>
    <ligand>
        <name>[4Fe-4S] cluster</name>
        <dbReference type="ChEBI" id="CHEBI:49883"/>
        <note>4Fe-4S-S-AdoMet</note>
    </ligand>
</feature>
<feature type="binding site" evidence="1">
    <location>
        <begin position="164"/>
        <end position="165"/>
    </location>
    <ligand>
        <name>S-adenosyl-L-methionine</name>
        <dbReference type="ChEBI" id="CHEBI:59789"/>
    </ligand>
</feature>
<feature type="binding site" evidence="1">
    <location>
        <position position="196"/>
    </location>
    <ligand>
        <name>S-adenosyl-L-methionine</name>
        <dbReference type="ChEBI" id="CHEBI:59789"/>
    </ligand>
</feature>
<feature type="binding site" evidence="1">
    <location>
        <position position="295"/>
    </location>
    <ligand>
        <name>S-adenosyl-L-methionine</name>
        <dbReference type="ChEBI" id="CHEBI:59789"/>
    </ligand>
</feature>
<feature type="disulfide bond" description="(transient)" evidence="1">
    <location>
        <begin position="106"/>
        <end position="336"/>
    </location>
</feature>
<keyword id="KW-0004">4Fe-4S</keyword>
<keyword id="KW-0963">Cytoplasm</keyword>
<keyword id="KW-1015">Disulfide bond</keyword>
<keyword id="KW-0408">Iron</keyword>
<keyword id="KW-0411">Iron-sulfur</keyword>
<keyword id="KW-0479">Metal-binding</keyword>
<keyword id="KW-0489">Methyltransferase</keyword>
<keyword id="KW-1185">Reference proteome</keyword>
<keyword id="KW-0698">rRNA processing</keyword>
<keyword id="KW-0949">S-adenosyl-L-methionine</keyword>
<keyword id="KW-0808">Transferase</keyword>
<keyword id="KW-0819">tRNA processing</keyword>
<protein>
    <recommendedName>
        <fullName evidence="1">Probable dual-specificity RNA methyltransferase RlmN</fullName>
        <ecNumber evidence="1">2.1.1.192</ecNumber>
    </recommendedName>
    <alternativeName>
        <fullName evidence="1">23S rRNA (adenine(2503)-C(2))-methyltransferase</fullName>
    </alternativeName>
    <alternativeName>
        <fullName evidence="1">23S rRNA m2A2503 methyltransferase</fullName>
    </alternativeName>
    <alternativeName>
        <fullName evidence="1">Ribosomal RNA large subunit methyltransferase N</fullName>
    </alternativeName>
    <alternativeName>
        <fullName evidence="1">tRNA (adenine(37)-C(2))-methyltransferase</fullName>
    </alternativeName>
    <alternativeName>
        <fullName evidence="1">tRNA m2A37 methyltransferase</fullName>
    </alternativeName>
</protein>
<accession>Q8EVK0</accession>
<gene>
    <name evidence="1" type="primary">rlmN</name>
    <name type="ordered locus">MYPE5630</name>
</gene>
<reference key="1">
    <citation type="journal article" date="2002" name="Nucleic Acids Res.">
        <title>The complete genomic sequence of Mycoplasma penetrans, an intracellular bacterial pathogen in humans.</title>
        <authorList>
            <person name="Sasaki Y."/>
            <person name="Ishikawa J."/>
            <person name="Yamashita A."/>
            <person name="Oshima K."/>
            <person name="Kenri T."/>
            <person name="Furuya K."/>
            <person name="Yoshino C."/>
            <person name="Horino A."/>
            <person name="Shiba T."/>
            <person name="Sasaki T."/>
            <person name="Hattori M."/>
        </authorList>
    </citation>
    <scope>NUCLEOTIDE SEQUENCE [LARGE SCALE GENOMIC DNA]</scope>
    <source>
        <strain>HF-2</strain>
    </source>
</reference>
<comment type="function">
    <text evidence="1">Specifically methylates position 2 of adenine 2503 in 23S rRNA and position 2 of adenine 37 in tRNAs.</text>
</comment>
<comment type="catalytic activity">
    <reaction evidence="1">
        <text>adenosine(2503) in 23S rRNA + 2 reduced [2Fe-2S]-[ferredoxin] + 2 S-adenosyl-L-methionine = 2-methyladenosine(2503) in 23S rRNA + 5'-deoxyadenosine + L-methionine + 2 oxidized [2Fe-2S]-[ferredoxin] + S-adenosyl-L-homocysteine</text>
        <dbReference type="Rhea" id="RHEA:42916"/>
        <dbReference type="Rhea" id="RHEA-COMP:10000"/>
        <dbReference type="Rhea" id="RHEA-COMP:10001"/>
        <dbReference type="Rhea" id="RHEA-COMP:10152"/>
        <dbReference type="Rhea" id="RHEA-COMP:10282"/>
        <dbReference type="ChEBI" id="CHEBI:17319"/>
        <dbReference type="ChEBI" id="CHEBI:33737"/>
        <dbReference type="ChEBI" id="CHEBI:33738"/>
        <dbReference type="ChEBI" id="CHEBI:57844"/>
        <dbReference type="ChEBI" id="CHEBI:57856"/>
        <dbReference type="ChEBI" id="CHEBI:59789"/>
        <dbReference type="ChEBI" id="CHEBI:74411"/>
        <dbReference type="ChEBI" id="CHEBI:74497"/>
        <dbReference type="EC" id="2.1.1.192"/>
    </reaction>
</comment>
<comment type="catalytic activity">
    <reaction evidence="1">
        <text>adenosine(37) in tRNA + 2 reduced [2Fe-2S]-[ferredoxin] + 2 S-adenosyl-L-methionine = 2-methyladenosine(37) in tRNA + 5'-deoxyadenosine + L-methionine + 2 oxidized [2Fe-2S]-[ferredoxin] + S-adenosyl-L-homocysteine</text>
        <dbReference type="Rhea" id="RHEA:43332"/>
        <dbReference type="Rhea" id="RHEA-COMP:10000"/>
        <dbReference type="Rhea" id="RHEA-COMP:10001"/>
        <dbReference type="Rhea" id="RHEA-COMP:10162"/>
        <dbReference type="Rhea" id="RHEA-COMP:10485"/>
        <dbReference type="ChEBI" id="CHEBI:17319"/>
        <dbReference type="ChEBI" id="CHEBI:33737"/>
        <dbReference type="ChEBI" id="CHEBI:33738"/>
        <dbReference type="ChEBI" id="CHEBI:57844"/>
        <dbReference type="ChEBI" id="CHEBI:57856"/>
        <dbReference type="ChEBI" id="CHEBI:59789"/>
        <dbReference type="ChEBI" id="CHEBI:74411"/>
        <dbReference type="ChEBI" id="CHEBI:74497"/>
        <dbReference type="EC" id="2.1.1.192"/>
    </reaction>
</comment>
<comment type="cofactor">
    <cofactor evidence="1">
        <name>[4Fe-4S] cluster</name>
        <dbReference type="ChEBI" id="CHEBI:49883"/>
    </cofactor>
    <text evidence="1">Binds 1 [4Fe-4S] cluster. The cluster is coordinated with 3 cysteines and an exchangeable S-adenosyl-L-methionine.</text>
</comment>
<comment type="subcellular location">
    <subcellularLocation>
        <location evidence="1">Cytoplasm</location>
    </subcellularLocation>
</comment>
<comment type="miscellaneous">
    <text evidence="1">Reaction proceeds by a ping-pong mechanism involving intermediate methylation of a conserved cysteine residue.</text>
</comment>
<comment type="similarity">
    <text evidence="1">Belongs to the radical SAM superfamily. RlmN family.</text>
</comment>
<evidence type="ECO:0000255" key="1">
    <source>
        <dbReference type="HAMAP-Rule" id="MF_01849"/>
    </source>
</evidence>
<evidence type="ECO:0000255" key="2">
    <source>
        <dbReference type="PROSITE-ProRule" id="PRU01266"/>
    </source>
</evidence>
<proteinExistence type="inferred from homology"/>
<sequence length="352" mass="40784">MLMNSIYSFTLQELKKELTKNNIKAFVAEQIFDWIYSKHVDSFDEMKNISKENIEKLKQLFSFENMVVDKLQVDKHDGTVKFLLKLEDGNFIETVIMKFNYGYSVCVTSQIGCNMACKFCASGLIRKKRNITVGEFIKQFIIAKEYVEKNFNDKLTHMVVMGIGEPFDNFENLIQFFEVIKQQKGLCISPRKITVSTCGLVEKIKEFADLKNQVNLAILLHAPNNEIRNKIMPINKVYSLDKVIEAMDYYIKVTKRRVTIEYILIKDVNDSDENAVELAKLLKGKLCYVNLIPYNKVVENNYFRSVRGKQFFDVLKKNNIQATIRLERGSSIDAACGQLRIKKILELRNAKV</sequence>
<name>RLMN_MALP2</name>
<dbReference type="EC" id="2.1.1.192" evidence="1"/>
<dbReference type="EMBL" id="BA000026">
    <property type="protein sequence ID" value="BAC44353.1"/>
    <property type="molecule type" value="Genomic_DNA"/>
</dbReference>
<dbReference type="SMR" id="Q8EVK0"/>
<dbReference type="FunCoup" id="Q8EVK0">
    <property type="interactions" value="239"/>
</dbReference>
<dbReference type="STRING" id="272633.gene:10731680"/>
<dbReference type="KEGG" id="mpe:MYPE5630"/>
<dbReference type="eggNOG" id="COG0820">
    <property type="taxonomic scope" value="Bacteria"/>
</dbReference>
<dbReference type="HOGENOM" id="CLU_029101_0_1_14"/>
<dbReference type="InParanoid" id="Q8EVK0"/>
<dbReference type="Proteomes" id="UP000002522">
    <property type="component" value="Chromosome"/>
</dbReference>
<dbReference type="GO" id="GO:0005737">
    <property type="term" value="C:cytoplasm"/>
    <property type="evidence" value="ECO:0007669"/>
    <property type="project" value="UniProtKB-SubCell"/>
</dbReference>
<dbReference type="GO" id="GO:0051539">
    <property type="term" value="F:4 iron, 4 sulfur cluster binding"/>
    <property type="evidence" value="ECO:0007669"/>
    <property type="project" value="UniProtKB-UniRule"/>
</dbReference>
<dbReference type="GO" id="GO:0046872">
    <property type="term" value="F:metal ion binding"/>
    <property type="evidence" value="ECO:0007669"/>
    <property type="project" value="UniProtKB-KW"/>
</dbReference>
<dbReference type="GO" id="GO:0070040">
    <property type="term" value="F:rRNA (adenine(2503)-C2-)-methyltransferase activity"/>
    <property type="evidence" value="ECO:0007669"/>
    <property type="project" value="UniProtKB-UniRule"/>
</dbReference>
<dbReference type="GO" id="GO:0019843">
    <property type="term" value="F:rRNA binding"/>
    <property type="evidence" value="ECO:0007669"/>
    <property type="project" value="UniProtKB-UniRule"/>
</dbReference>
<dbReference type="GO" id="GO:0002935">
    <property type="term" value="F:tRNA (adenine(37)-C2)-methyltransferase activity"/>
    <property type="evidence" value="ECO:0007669"/>
    <property type="project" value="UniProtKB-UniRule"/>
</dbReference>
<dbReference type="GO" id="GO:0000049">
    <property type="term" value="F:tRNA binding"/>
    <property type="evidence" value="ECO:0007669"/>
    <property type="project" value="UniProtKB-UniRule"/>
</dbReference>
<dbReference type="GO" id="GO:0070475">
    <property type="term" value="P:rRNA base methylation"/>
    <property type="evidence" value="ECO:0007669"/>
    <property type="project" value="UniProtKB-UniRule"/>
</dbReference>
<dbReference type="GO" id="GO:0030488">
    <property type="term" value="P:tRNA methylation"/>
    <property type="evidence" value="ECO:0007669"/>
    <property type="project" value="UniProtKB-UniRule"/>
</dbReference>
<dbReference type="CDD" id="cd01335">
    <property type="entry name" value="Radical_SAM"/>
    <property type="match status" value="1"/>
</dbReference>
<dbReference type="FunFam" id="3.20.20.70:FF:000014">
    <property type="entry name" value="Probable dual-specificity RNA methyltransferase RlmN"/>
    <property type="match status" value="1"/>
</dbReference>
<dbReference type="Gene3D" id="1.10.150.530">
    <property type="match status" value="1"/>
</dbReference>
<dbReference type="Gene3D" id="3.20.20.70">
    <property type="entry name" value="Aldolase class I"/>
    <property type="match status" value="1"/>
</dbReference>
<dbReference type="HAMAP" id="MF_01849">
    <property type="entry name" value="RNA_methyltr_RlmN"/>
    <property type="match status" value="1"/>
</dbReference>
<dbReference type="InterPro" id="IPR013785">
    <property type="entry name" value="Aldolase_TIM"/>
</dbReference>
<dbReference type="InterPro" id="IPR040072">
    <property type="entry name" value="Methyltransferase_A"/>
</dbReference>
<dbReference type="InterPro" id="IPR048641">
    <property type="entry name" value="RlmN_N"/>
</dbReference>
<dbReference type="InterPro" id="IPR027492">
    <property type="entry name" value="RNA_MTrfase_RlmN"/>
</dbReference>
<dbReference type="InterPro" id="IPR004383">
    <property type="entry name" value="rRNA_lsu_MTrfase_RlmN/Cfr"/>
</dbReference>
<dbReference type="InterPro" id="IPR007197">
    <property type="entry name" value="rSAM"/>
</dbReference>
<dbReference type="NCBIfam" id="TIGR00048">
    <property type="entry name" value="rRNA_mod_RlmN"/>
    <property type="match status" value="1"/>
</dbReference>
<dbReference type="PANTHER" id="PTHR30544">
    <property type="entry name" value="23S RRNA METHYLTRANSFERASE"/>
    <property type="match status" value="1"/>
</dbReference>
<dbReference type="PANTHER" id="PTHR30544:SF5">
    <property type="entry name" value="RADICAL SAM CORE DOMAIN-CONTAINING PROTEIN"/>
    <property type="match status" value="1"/>
</dbReference>
<dbReference type="Pfam" id="PF04055">
    <property type="entry name" value="Radical_SAM"/>
    <property type="match status" value="1"/>
</dbReference>
<dbReference type="Pfam" id="PF21016">
    <property type="entry name" value="RlmN_N"/>
    <property type="match status" value="1"/>
</dbReference>
<dbReference type="PIRSF" id="PIRSF006004">
    <property type="entry name" value="CHP00048"/>
    <property type="match status" value="1"/>
</dbReference>
<dbReference type="SFLD" id="SFLDF00275">
    <property type="entry name" value="adenosine_C2_methyltransferase"/>
    <property type="match status" value="1"/>
</dbReference>
<dbReference type="SFLD" id="SFLDG01062">
    <property type="entry name" value="methyltransferase_(Class_A)"/>
    <property type="match status" value="1"/>
</dbReference>
<dbReference type="SUPFAM" id="SSF102114">
    <property type="entry name" value="Radical SAM enzymes"/>
    <property type="match status" value="1"/>
</dbReference>
<dbReference type="PROSITE" id="PS51918">
    <property type="entry name" value="RADICAL_SAM"/>
    <property type="match status" value="1"/>
</dbReference>